<protein>
    <recommendedName>
        <fullName evidence="1">ATP synthase subunit beta</fullName>
        <ecNumber evidence="1">7.1.2.2</ecNumber>
    </recommendedName>
    <alternativeName>
        <fullName evidence="1">ATP synthase F1 sector subunit beta</fullName>
    </alternativeName>
    <alternativeName>
        <fullName evidence="1">F-ATPase subunit beta</fullName>
    </alternativeName>
</protein>
<reference key="1">
    <citation type="submission" date="2006-09" db="EMBL/GenBank/DDBJ databases">
        <title>Complete sequence of chromosome 1 of Shewanella sp. ANA-3.</title>
        <authorList>
            <person name="Copeland A."/>
            <person name="Lucas S."/>
            <person name="Lapidus A."/>
            <person name="Barry K."/>
            <person name="Detter J.C."/>
            <person name="Glavina del Rio T."/>
            <person name="Hammon N."/>
            <person name="Israni S."/>
            <person name="Dalin E."/>
            <person name="Tice H."/>
            <person name="Pitluck S."/>
            <person name="Chertkov O."/>
            <person name="Brettin T."/>
            <person name="Bruce D."/>
            <person name="Han C."/>
            <person name="Tapia R."/>
            <person name="Gilna P."/>
            <person name="Schmutz J."/>
            <person name="Larimer F."/>
            <person name="Land M."/>
            <person name="Hauser L."/>
            <person name="Kyrpides N."/>
            <person name="Kim E."/>
            <person name="Newman D."/>
            <person name="Salticov C."/>
            <person name="Konstantinidis K."/>
            <person name="Klappenback J."/>
            <person name="Tiedje J."/>
            <person name="Richardson P."/>
        </authorList>
    </citation>
    <scope>NUCLEOTIDE SEQUENCE [LARGE SCALE GENOMIC DNA]</scope>
    <source>
        <strain>ANA-3</strain>
    </source>
</reference>
<organism>
    <name type="scientific">Shewanella sp. (strain ANA-3)</name>
    <dbReference type="NCBI Taxonomy" id="94122"/>
    <lineage>
        <taxon>Bacteria</taxon>
        <taxon>Pseudomonadati</taxon>
        <taxon>Pseudomonadota</taxon>
        <taxon>Gammaproteobacteria</taxon>
        <taxon>Alteromonadales</taxon>
        <taxon>Shewanellaceae</taxon>
        <taxon>Shewanella</taxon>
    </lineage>
</organism>
<keyword id="KW-0066">ATP synthesis</keyword>
<keyword id="KW-0067">ATP-binding</keyword>
<keyword id="KW-0997">Cell inner membrane</keyword>
<keyword id="KW-1003">Cell membrane</keyword>
<keyword id="KW-0139">CF(1)</keyword>
<keyword id="KW-0375">Hydrogen ion transport</keyword>
<keyword id="KW-0406">Ion transport</keyword>
<keyword id="KW-0472">Membrane</keyword>
<keyword id="KW-0547">Nucleotide-binding</keyword>
<keyword id="KW-1278">Translocase</keyword>
<keyword id="KW-0813">Transport</keyword>
<feature type="chain" id="PRO_1000055163" description="ATP synthase subunit beta">
    <location>
        <begin position="1"/>
        <end position="463"/>
    </location>
</feature>
<feature type="binding site" evidence="1">
    <location>
        <begin position="152"/>
        <end position="159"/>
    </location>
    <ligand>
        <name>ATP</name>
        <dbReference type="ChEBI" id="CHEBI:30616"/>
    </ligand>
</feature>
<accession>A0L2S8</accession>
<name>ATPB_SHESA</name>
<proteinExistence type="inferred from homology"/>
<evidence type="ECO:0000255" key="1">
    <source>
        <dbReference type="HAMAP-Rule" id="MF_01347"/>
    </source>
</evidence>
<comment type="function">
    <text evidence="1">Produces ATP from ADP in the presence of a proton gradient across the membrane. The catalytic sites are hosted primarily by the beta subunits.</text>
</comment>
<comment type="catalytic activity">
    <reaction evidence="1">
        <text>ATP + H2O + 4 H(+)(in) = ADP + phosphate + 5 H(+)(out)</text>
        <dbReference type="Rhea" id="RHEA:57720"/>
        <dbReference type="ChEBI" id="CHEBI:15377"/>
        <dbReference type="ChEBI" id="CHEBI:15378"/>
        <dbReference type="ChEBI" id="CHEBI:30616"/>
        <dbReference type="ChEBI" id="CHEBI:43474"/>
        <dbReference type="ChEBI" id="CHEBI:456216"/>
        <dbReference type="EC" id="7.1.2.2"/>
    </reaction>
</comment>
<comment type="subunit">
    <text evidence="1">F-type ATPases have 2 components, CF(1) - the catalytic core - and CF(0) - the membrane proton channel. CF(1) has five subunits: alpha(3), beta(3), gamma(1), delta(1), epsilon(1). CF(0) has three main subunits: a(1), b(2) and c(9-12). The alpha and beta chains form an alternating ring which encloses part of the gamma chain. CF(1) is attached to CF(0) by a central stalk formed by the gamma and epsilon chains, while a peripheral stalk is formed by the delta and b chains.</text>
</comment>
<comment type="subcellular location">
    <subcellularLocation>
        <location evidence="1">Cell inner membrane</location>
        <topology evidence="1">Peripheral membrane protein</topology>
    </subcellularLocation>
</comment>
<comment type="similarity">
    <text evidence="1">Belongs to the ATPase alpha/beta chains family.</text>
</comment>
<gene>
    <name evidence="1" type="primary">atpD</name>
    <name type="ordered locus">Shewana3_4130</name>
</gene>
<sequence length="463" mass="49804">MSTGTVVQVIGAVVDVEFPQDAVPQVYDALKITGEGSCNGLVLEVQQQLGGGVVRTIAMGTSDGLRRGLEVVNSGSPISVPVGTATLGRIMNVLGDPIDEAGAIGEEERYVIHRSAPSYEEQSNTTELLETGIKVIDLVCPFAKGGKVGLFGGAGVGKTVNMMELINNIAKAHSGLSVFAGVGERTREGNDFYYEMKDSGVLDKVAMVYGQMNEPPGNRLRVALTGLTMAEKFRDEGRDVLLFVDNIYRYTLAGTEVSALLGRMPSAVGYQPTLAEEMGVLQERITSTKTGSITSVQAVYVPADDLTDPSPATTFAHLDATVVLSRQIASLGIYPAVDPLDSTSRQLDPLVVGQEHYDVANGVQTVLQRYKELKDIIAILGMDELSDEDKMTVSRARKIERFLSQPFHVAEVFTGSPGKYVSLKDTIRGFKGILSGEFDHIPEQAFYMVGSIDEAVEKANKKK</sequence>
<dbReference type="EC" id="7.1.2.2" evidence="1"/>
<dbReference type="EMBL" id="CP000469">
    <property type="protein sequence ID" value="ABK50347.1"/>
    <property type="molecule type" value="Genomic_DNA"/>
</dbReference>
<dbReference type="RefSeq" id="WP_011718832.1">
    <property type="nucleotide sequence ID" value="NC_008577.1"/>
</dbReference>
<dbReference type="SMR" id="A0L2S8"/>
<dbReference type="STRING" id="94122.Shewana3_4130"/>
<dbReference type="KEGG" id="shn:Shewana3_4130"/>
<dbReference type="eggNOG" id="COG0055">
    <property type="taxonomic scope" value="Bacteria"/>
</dbReference>
<dbReference type="HOGENOM" id="CLU_022398_0_2_6"/>
<dbReference type="OrthoDB" id="9801639at2"/>
<dbReference type="Proteomes" id="UP000002589">
    <property type="component" value="Chromosome"/>
</dbReference>
<dbReference type="GO" id="GO:0005886">
    <property type="term" value="C:plasma membrane"/>
    <property type="evidence" value="ECO:0007669"/>
    <property type="project" value="UniProtKB-SubCell"/>
</dbReference>
<dbReference type="GO" id="GO:0045259">
    <property type="term" value="C:proton-transporting ATP synthase complex"/>
    <property type="evidence" value="ECO:0007669"/>
    <property type="project" value="UniProtKB-KW"/>
</dbReference>
<dbReference type="GO" id="GO:0005524">
    <property type="term" value="F:ATP binding"/>
    <property type="evidence" value="ECO:0007669"/>
    <property type="project" value="UniProtKB-UniRule"/>
</dbReference>
<dbReference type="GO" id="GO:0016887">
    <property type="term" value="F:ATP hydrolysis activity"/>
    <property type="evidence" value="ECO:0007669"/>
    <property type="project" value="InterPro"/>
</dbReference>
<dbReference type="GO" id="GO:0046933">
    <property type="term" value="F:proton-transporting ATP synthase activity, rotational mechanism"/>
    <property type="evidence" value="ECO:0007669"/>
    <property type="project" value="UniProtKB-UniRule"/>
</dbReference>
<dbReference type="CDD" id="cd18110">
    <property type="entry name" value="ATP-synt_F1_beta_C"/>
    <property type="match status" value="1"/>
</dbReference>
<dbReference type="CDD" id="cd18115">
    <property type="entry name" value="ATP-synt_F1_beta_N"/>
    <property type="match status" value="1"/>
</dbReference>
<dbReference type="CDD" id="cd01133">
    <property type="entry name" value="F1-ATPase_beta_CD"/>
    <property type="match status" value="1"/>
</dbReference>
<dbReference type="FunFam" id="1.10.1140.10:FF:000001">
    <property type="entry name" value="ATP synthase subunit beta"/>
    <property type="match status" value="1"/>
</dbReference>
<dbReference type="FunFam" id="2.40.10.170:FF:000003">
    <property type="entry name" value="ATP synthase subunit beta"/>
    <property type="match status" value="1"/>
</dbReference>
<dbReference type="FunFam" id="3.40.50.300:FF:000004">
    <property type="entry name" value="ATP synthase subunit beta"/>
    <property type="match status" value="1"/>
</dbReference>
<dbReference type="Gene3D" id="2.40.10.170">
    <property type="match status" value="1"/>
</dbReference>
<dbReference type="Gene3D" id="1.10.1140.10">
    <property type="entry name" value="Bovine Mitochondrial F1-atpase, Atp Synthase Beta Chain, Chain D, domain 3"/>
    <property type="match status" value="1"/>
</dbReference>
<dbReference type="Gene3D" id="3.40.50.300">
    <property type="entry name" value="P-loop containing nucleotide triphosphate hydrolases"/>
    <property type="match status" value="1"/>
</dbReference>
<dbReference type="HAMAP" id="MF_01347">
    <property type="entry name" value="ATP_synth_beta_bact"/>
    <property type="match status" value="1"/>
</dbReference>
<dbReference type="InterPro" id="IPR003593">
    <property type="entry name" value="AAA+_ATPase"/>
</dbReference>
<dbReference type="InterPro" id="IPR055190">
    <property type="entry name" value="ATP-synt_VA_C"/>
</dbReference>
<dbReference type="InterPro" id="IPR005722">
    <property type="entry name" value="ATP_synth_F1_bsu"/>
</dbReference>
<dbReference type="InterPro" id="IPR020003">
    <property type="entry name" value="ATPase_a/bsu_AS"/>
</dbReference>
<dbReference type="InterPro" id="IPR050053">
    <property type="entry name" value="ATPase_alpha/beta_chains"/>
</dbReference>
<dbReference type="InterPro" id="IPR004100">
    <property type="entry name" value="ATPase_F1/V1/A1_a/bsu_N"/>
</dbReference>
<dbReference type="InterPro" id="IPR036121">
    <property type="entry name" value="ATPase_F1/V1/A1_a/bsu_N_sf"/>
</dbReference>
<dbReference type="InterPro" id="IPR000194">
    <property type="entry name" value="ATPase_F1/V1/A1_a/bsu_nucl-bd"/>
</dbReference>
<dbReference type="InterPro" id="IPR024034">
    <property type="entry name" value="ATPase_F1/V1_b/a_C"/>
</dbReference>
<dbReference type="InterPro" id="IPR027417">
    <property type="entry name" value="P-loop_NTPase"/>
</dbReference>
<dbReference type="NCBIfam" id="TIGR01039">
    <property type="entry name" value="atpD"/>
    <property type="match status" value="1"/>
</dbReference>
<dbReference type="PANTHER" id="PTHR15184">
    <property type="entry name" value="ATP SYNTHASE"/>
    <property type="match status" value="1"/>
</dbReference>
<dbReference type="PANTHER" id="PTHR15184:SF71">
    <property type="entry name" value="ATP SYNTHASE SUBUNIT BETA, MITOCHONDRIAL"/>
    <property type="match status" value="1"/>
</dbReference>
<dbReference type="Pfam" id="PF00006">
    <property type="entry name" value="ATP-synt_ab"/>
    <property type="match status" value="1"/>
</dbReference>
<dbReference type="Pfam" id="PF02874">
    <property type="entry name" value="ATP-synt_ab_N"/>
    <property type="match status" value="1"/>
</dbReference>
<dbReference type="Pfam" id="PF22919">
    <property type="entry name" value="ATP-synt_VA_C"/>
    <property type="match status" value="1"/>
</dbReference>
<dbReference type="SMART" id="SM00382">
    <property type="entry name" value="AAA"/>
    <property type="match status" value="1"/>
</dbReference>
<dbReference type="SUPFAM" id="SSF47917">
    <property type="entry name" value="C-terminal domain of alpha and beta subunits of F1 ATP synthase"/>
    <property type="match status" value="1"/>
</dbReference>
<dbReference type="SUPFAM" id="SSF50615">
    <property type="entry name" value="N-terminal domain of alpha and beta subunits of F1 ATP synthase"/>
    <property type="match status" value="1"/>
</dbReference>
<dbReference type="SUPFAM" id="SSF52540">
    <property type="entry name" value="P-loop containing nucleoside triphosphate hydrolases"/>
    <property type="match status" value="1"/>
</dbReference>
<dbReference type="PROSITE" id="PS00152">
    <property type="entry name" value="ATPASE_ALPHA_BETA"/>
    <property type="match status" value="1"/>
</dbReference>